<accession>Q75DE8</accession>
<proteinExistence type="inferred from homology"/>
<dbReference type="EMBL" id="AE016815">
    <property type="protein sequence ID" value="AAS50849.1"/>
    <property type="molecule type" value="Genomic_DNA"/>
</dbReference>
<dbReference type="RefSeq" id="NP_983025.1">
    <property type="nucleotide sequence ID" value="NM_208378.1"/>
</dbReference>
<dbReference type="SMR" id="Q75DE8"/>
<dbReference type="STRING" id="284811.Q75DE8"/>
<dbReference type="EnsemblFungi" id="AAS50849">
    <property type="protein sequence ID" value="AAS50849"/>
    <property type="gene ID" value="AGOS_ABR079C"/>
</dbReference>
<dbReference type="GeneID" id="4619129"/>
<dbReference type="KEGG" id="ago:AGOS_ABR079C"/>
<dbReference type="eggNOG" id="ENOG502S2V2">
    <property type="taxonomic scope" value="Eukaryota"/>
</dbReference>
<dbReference type="HOGENOM" id="CLU_090087_0_0_1"/>
<dbReference type="InParanoid" id="Q75DE8"/>
<dbReference type="OMA" id="EICERIM"/>
<dbReference type="OrthoDB" id="5573898at2759"/>
<dbReference type="Proteomes" id="UP000000591">
    <property type="component" value="Chromosome II"/>
</dbReference>
<dbReference type="GO" id="GO:0005737">
    <property type="term" value="C:cytoplasm"/>
    <property type="evidence" value="ECO:0007669"/>
    <property type="project" value="UniProtKB-KW"/>
</dbReference>
<dbReference type="GO" id="GO:0042729">
    <property type="term" value="C:DASH complex"/>
    <property type="evidence" value="ECO:0000250"/>
    <property type="project" value="UniProtKB"/>
</dbReference>
<dbReference type="GO" id="GO:0005874">
    <property type="term" value="C:microtubule"/>
    <property type="evidence" value="ECO:0007669"/>
    <property type="project" value="UniProtKB-KW"/>
</dbReference>
<dbReference type="GO" id="GO:0072686">
    <property type="term" value="C:mitotic spindle"/>
    <property type="evidence" value="ECO:0007669"/>
    <property type="project" value="InterPro"/>
</dbReference>
<dbReference type="GO" id="GO:0051010">
    <property type="term" value="F:microtubule plus-end binding"/>
    <property type="evidence" value="ECO:0007669"/>
    <property type="project" value="EnsemblFungi"/>
</dbReference>
<dbReference type="GO" id="GO:0051301">
    <property type="term" value="P:cell division"/>
    <property type="evidence" value="ECO:0007669"/>
    <property type="project" value="UniProtKB-KW"/>
</dbReference>
<dbReference type="GO" id="GO:1990758">
    <property type="term" value="P:mitotic sister chromatid biorientation"/>
    <property type="evidence" value="ECO:0000250"/>
    <property type="project" value="UniProtKB"/>
</dbReference>
<dbReference type="GO" id="GO:0051987">
    <property type="term" value="P:positive regulation of attachment of spindle microtubules to kinetochore"/>
    <property type="evidence" value="ECO:0007669"/>
    <property type="project" value="EnsemblFungi"/>
</dbReference>
<dbReference type="GO" id="GO:0031116">
    <property type="term" value="P:positive regulation of microtubule polymerization"/>
    <property type="evidence" value="ECO:0007669"/>
    <property type="project" value="EnsemblFungi"/>
</dbReference>
<dbReference type="GO" id="GO:1990976">
    <property type="term" value="P:protein transport along microtubule to mitotic spindle pole body"/>
    <property type="evidence" value="ECO:0000250"/>
    <property type="project" value="UniProtKB"/>
</dbReference>
<dbReference type="InterPro" id="IPR013964">
    <property type="entry name" value="DASH_Ask1"/>
</dbReference>
<dbReference type="PANTHER" id="PTHR28200">
    <property type="entry name" value="DASH COMPLEX SUBUNIT ASK1"/>
    <property type="match status" value="1"/>
</dbReference>
<dbReference type="PANTHER" id="PTHR28200:SF1">
    <property type="entry name" value="DASH COMPLEX SUBUNIT ASK1"/>
    <property type="match status" value="1"/>
</dbReference>
<dbReference type="Pfam" id="PF08655">
    <property type="entry name" value="DASH_Ask1"/>
    <property type="match status" value="1"/>
</dbReference>
<evidence type="ECO:0000250" key="1">
    <source>
        <dbReference type="UniProtKB" id="P35734"/>
    </source>
</evidence>
<evidence type="ECO:0000250" key="2">
    <source>
        <dbReference type="UniProtKB" id="Q9P6S5"/>
    </source>
</evidence>
<evidence type="ECO:0000256" key="3">
    <source>
        <dbReference type="SAM" id="MobiDB-lite"/>
    </source>
</evidence>
<evidence type="ECO:0000305" key="4"/>
<feature type="chain" id="PRO_0000211313" description="DASH complex subunit ASK1">
    <location>
        <begin position="1"/>
        <end position="181"/>
    </location>
</feature>
<feature type="region of interest" description="Disordered" evidence="3">
    <location>
        <begin position="77"/>
        <end position="181"/>
    </location>
</feature>
<feature type="compositionally biased region" description="Low complexity" evidence="3">
    <location>
        <begin position="133"/>
        <end position="165"/>
    </location>
</feature>
<name>ASK1_EREGS</name>
<comment type="function">
    <text evidence="1">Component of the DASH complex that connects microtubules with kinetochores and couples microtubule depolymerisation to chromosome movement; it is involved in retrieving kinetochores to the spindle poles before their re-orientation on the spindle in early mitosis and allows microtubule depolymerization to pull chromosomes apart and resist detachment during anaphase. Kinetochores, consisting of a centromere-associated inner segment and a microtubule-contacting outer segment, play a crucial role in chromosome segregation by mediating the physical connection between centromeric DNA and microtubules. Kinetochores also serve as an input point for the spindle assembly checkpoint, which delays anaphase until all chromosomes have bioriented on the mitotic spindle.</text>
</comment>
<comment type="subunit">
    <text evidence="1 2">Component of the DASH complex consisting of ASK1, DAD1, DAD2, DAD3, DAD4, DAM1, DUO1, HSK3, SPC19 and SPC34, with a stoichiometry of one copy of each subunit per complex. Multiple DASH complexes oligomerize to form a ring that encircles spindle microtubules and organizes the rod-like NDC80 complexes of the outer kinetochore. DASH complex oligomerization strengthens microtubule attachments (By similarity). On cytoplasmic microtubules, DASH complexes appear to form patches instead of rings (By similarity).</text>
</comment>
<comment type="subcellular location">
    <subcellularLocation>
        <location evidence="1">Nucleus</location>
    </subcellularLocation>
    <subcellularLocation>
        <location evidence="1">Cytoplasm</location>
        <location evidence="1">Cytoskeleton</location>
        <location evidence="1">Spindle</location>
    </subcellularLocation>
    <subcellularLocation>
        <location evidence="1">Chromosome</location>
        <location evidence="1">Centromere</location>
        <location evidence="1">Kinetochore</location>
    </subcellularLocation>
</comment>
<comment type="similarity">
    <text evidence="4">Belongs to the DASH complex ASK1 family.</text>
</comment>
<sequence length="181" mass="19596">MARQPPAPEPTLEQLDQEITLQLQKIDANLSACFSKITKDIIPAVARYGAVCDDALSACSWLRELFQKSSDIQLATEPAAPAPAAESLFPQAPAPRAPEVTTEGHVLAVPVSSDDEPDDGSTLQRQHKRRKLSLQLQQRYGSSSSSSFVSRSPTLRTRPASSPLRAPDDPDPPAVLRFAAR</sequence>
<reference key="1">
    <citation type="journal article" date="2004" name="Science">
        <title>The Ashbya gossypii genome as a tool for mapping the ancient Saccharomyces cerevisiae genome.</title>
        <authorList>
            <person name="Dietrich F.S."/>
            <person name="Voegeli S."/>
            <person name="Brachat S."/>
            <person name="Lerch A."/>
            <person name="Gates K."/>
            <person name="Steiner S."/>
            <person name="Mohr C."/>
            <person name="Poehlmann R."/>
            <person name="Luedi P."/>
            <person name="Choi S."/>
            <person name="Wing R.A."/>
            <person name="Flavier A."/>
            <person name="Gaffney T.D."/>
            <person name="Philippsen P."/>
        </authorList>
    </citation>
    <scope>NUCLEOTIDE SEQUENCE [LARGE SCALE GENOMIC DNA]</scope>
    <source>
        <strain>ATCC 10895 / CBS 109.51 / FGSC 9923 / NRRL Y-1056</strain>
    </source>
</reference>
<reference key="2">
    <citation type="journal article" date="2013" name="G3 (Bethesda)">
        <title>Genomes of Ashbya fungi isolated from insects reveal four mating-type loci, numerous translocations, lack of transposons, and distinct gene duplications.</title>
        <authorList>
            <person name="Dietrich F.S."/>
            <person name="Voegeli S."/>
            <person name="Kuo S."/>
            <person name="Philippsen P."/>
        </authorList>
    </citation>
    <scope>GENOME REANNOTATION</scope>
    <source>
        <strain>ATCC 10895 / CBS 109.51 / FGSC 9923 / NRRL Y-1056</strain>
    </source>
</reference>
<keyword id="KW-0131">Cell cycle</keyword>
<keyword id="KW-0132">Cell division</keyword>
<keyword id="KW-0137">Centromere</keyword>
<keyword id="KW-0158">Chromosome</keyword>
<keyword id="KW-0159">Chromosome partition</keyword>
<keyword id="KW-0963">Cytoplasm</keyword>
<keyword id="KW-0206">Cytoskeleton</keyword>
<keyword id="KW-0995">Kinetochore</keyword>
<keyword id="KW-0493">Microtubule</keyword>
<keyword id="KW-0498">Mitosis</keyword>
<keyword id="KW-0539">Nucleus</keyword>
<keyword id="KW-1185">Reference proteome</keyword>
<gene>
    <name type="primary">ASK1</name>
    <name type="ordered locus">ABR079C</name>
</gene>
<protein>
    <recommendedName>
        <fullName>DASH complex subunit ASK1</fullName>
    </recommendedName>
    <alternativeName>
        <fullName>Associated with spindles and kinetochores protein 1</fullName>
    </alternativeName>
    <alternativeName>
        <fullName>Outer kinetochore protein ASK1</fullName>
    </alternativeName>
</protein>
<organism>
    <name type="scientific">Eremothecium gossypii (strain ATCC 10895 / CBS 109.51 / FGSC 9923 / NRRL Y-1056)</name>
    <name type="common">Yeast</name>
    <name type="synonym">Ashbya gossypii</name>
    <dbReference type="NCBI Taxonomy" id="284811"/>
    <lineage>
        <taxon>Eukaryota</taxon>
        <taxon>Fungi</taxon>
        <taxon>Dikarya</taxon>
        <taxon>Ascomycota</taxon>
        <taxon>Saccharomycotina</taxon>
        <taxon>Saccharomycetes</taxon>
        <taxon>Saccharomycetales</taxon>
        <taxon>Saccharomycetaceae</taxon>
        <taxon>Eremothecium</taxon>
    </lineage>
</organism>